<dbReference type="EC" id="2.5.1.3" evidence="1"/>
<dbReference type="EMBL" id="CP000099">
    <property type="protein sequence ID" value="AAZ72197.1"/>
    <property type="molecule type" value="Genomic_DNA"/>
</dbReference>
<dbReference type="SMR" id="Q466J5"/>
<dbReference type="STRING" id="269797.Mbar_A3318"/>
<dbReference type="PaxDb" id="269797-Mbar_A3318"/>
<dbReference type="KEGG" id="mba:Mbar_A3318"/>
<dbReference type="eggNOG" id="arCOG01089">
    <property type="taxonomic scope" value="Archaea"/>
</dbReference>
<dbReference type="HOGENOM" id="CLU_018272_3_2_2"/>
<dbReference type="OrthoDB" id="85572at2157"/>
<dbReference type="UniPathway" id="UPA00060">
    <property type="reaction ID" value="UER00141"/>
</dbReference>
<dbReference type="GO" id="GO:0005737">
    <property type="term" value="C:cytoplasm"/>
    <property type="evidence" value="ECO:0007669"/>
    <property type="project" value="TreeGrafter"/>
</dbReference>
<dbReference type="GO" id="GO:0000287">
    <property type="term" value="F:magnesium ion binding"/>
    <property type="evidence" value="ECO:0007669"/>
    <property type="project" value="UniProtKB-UniRule"/>
</dbReference>
<dbReference type="GO" id="GO:0004789">
    <property type="term" value="F:thiamine-phosphate diphosphorylase activity"/>
    <property type="evidence" value="ECO:0007669"/>
    <property type="project" value="UniProtKB-UniRule"/>
</dbReference>
<dbReference type="GO" id="GO:0009228">
    <property type="term" value="P:thiamine biosynthetic process"/>
    <property type="evidence" value="ECO:0007669"/>
    <property type="project" value="UniProtKB-KW"/>
</dbReference>
<dbReference type="GO" id="GO:0009229">
    <property type="term" value="P:thiamine diphosphate biosynthetic process"/>
    <property type="evidence" value="ECO:0007669"/>
    <property type="project" value="UniProtKB-UniRule"/>
</dbReference>
<dbReference type="CDD" id="cd00564">
    <property type="entry name" value="TMP_TenI"/>
    <property type="match status" value="1"/>
</dbReference>
<dbReference type="FunFam" id="3.20.20.70:FF:000096">
    <property type="entry name" value="Thiamine-phosphate synthase"/>
    <property type="match status" value="1"/>
</dbReference>
<dbReference type="Gene3D" id="3.20.20.70">
    <property type="entry name" value="Aldolase class I"/>
    <property type="match status" value="1"/>
</dbReference>
<dbReference type="HAMAP" id="MF_00097">
    <property type="entry name" value="TMP_synthase"/>
    <property type="match status" value="1"/>
</dbReference>
<dbReference type="InterPro" id="IPR013785">
    <property type="entry name" value="Aldolase_TIM"/>
</dbReference>
<dbReference type="InterPro" id="IPR036206">
    <property type="entry name" value="ThiamineP_synth_sf"/>
</dbReference>
<dbReference type="InterPro" id="IPR022998">
    <property type="entry name" value="ThiamineP_synth_TenI"/>
</dbReference>
<dbReference type="InterPro" id="IPR034291">
    <property type="entry name" value="TMP_synthase"/>
</dbReference>
<dbReference type="NCBIfam" id="TIGR00693">
    <property type="entry name" value="thiE"/>
    <property type="match status" value="1"/>
</dbReference>
<dbReference type="PANTHER" id="PTHR20857:SF23">
    <property type="entry name" value="THIAMINE BIOSYNTHETIC BIFUNCTIONAL ENZYME"/>
    <property type="match status" value="1"/>
</dbReference>
<dbReference type="PANTHER" id="PTHR20857">
    <property type="entry name" value="THIAMINE-PHOSPHATE PYROPHOSPHORYLASE"/>
    <property type="match status" value="1"/>
</dbReference>
<dbReference type="Pfam" id="PF02581">
    <property type="entry name" value="TMP-TENI"/>
    <property type="match status" value="1"/>
</dbReference>
<dbReference type="SUPFAM" id="SSF51391">
    <property type="entry name" value="Thiamin phosphate synthase"/>
    <property type="match status" value="1"/>
</dbReference>
<proteinExistence type="inferred from homology"/>
<sequence length="220" mass="24007">MKQKGFSRKSSLLKEIDFYLVTDSGLSMKGTLSDVRDAVESGCRIVQYREKDKSTKEMVEEASEIKRICSGRAIFLVNDRIDVALAVDADGVHIGQDDMPVETARKLLGEDKIIGLSVNDREEAVLAEKLGADYVGLGPIFDTATKKDAGEGIGPLKIREVKDAIKLPVVAIGGINKENCESVIQNGADSLVAISAVVCSNDVKREAKYFIDMIRRTRKA</sequence>
<reference key="1">
    <citation type="journal article" date="2006" name="J. Bacteriol.">
        <title>The Methanosarcina barkeri genome: comparative analysis with Methanosarcina acetivorans and Methanosarcina mazei reveals extensive rearrangement within methanosarcinal genomes.</title>
        <authorList>
            <person name="Maeder D.L."/>
            <person name="Anderson I."/>
            <person name="Brettin T.S."/>
            <person name="Bruce D.C."/>
            <person name="Gilna P."/>
            <person name="Han C.S."/>
            <person name="Lapidus A."/>
            <person name="Metcalf W.W."/>
            <person name="Saunders E."/>
            <person name="Tapia R."/>
            <person name="Sowers K.R."/>
        </authorList>
    </citation>
    <scope>NUCLEOTIDE SEQUENCE [LARGE SCALE GENOMIC DNA]</scope>
    <source>
        <strain>Fusaro / DSM 804</strain>
    </source>
</reference>
<keyword id="KW-0460">Magnesium</keyword>
<keyword id="KW-0479">Metal-binding</keyword>
<keyword id="KW-0784">Thiamine biosynthesis</keyword>
<keyword id="KW-0808">Transferase</keyword>
<protein>
    <recommendedName>
        <fullName evidence="1">Thiamine-phosphate synthase</fullName>
        <shortName evidence="1">TP synthase</shortName>
        <shortName evidence="1">TPS</shortName>
        <ecNumber evidence="1">2.5.1.3</ecNumber>
    </recommendedName>
    <alternativeName>
        <fullName evidence="1">Thiamine-phosphate pyrophosphorylase</fullName>
        <shortName evidence="1">TMP pyrophosphorylase</shortName>
        <shortName evidence="1">TMP-PPase</shortName>
    </alternativeName>
</protein>
<evidence type="ECO:0000255" key="1">
    <source>
        <dbReference type="HAMAP-Rule" id="MF_00097"/>
    </source>
</evidence>
<gene>
    <name evidence="1" type="primary">thiE</name>
    <name type="ordered locus">Mbar_A3318</name>
</gene>
<feature type="chain" id="PRO_0000336437" description="Thiamine-phosphate synthase">
    <location>
        <begin position="1"/>
        <end position="220"/>
    </location>
</feature>
<feature type="binding site" evidence="1">
    <location>
        <begin position="47"/>
        <end position="51"/>
    </location>
    <ligand>
        <name>4-amino-2-methyl-5-(diphosphooxymethyl)pyrimidine</name>
        <dbReference type="ChEBI" id="CHEBI:57841"/>
    </ligand>
</feature>
<feature type="binding site" evidence="1">
    <location>
        <position position="78"/>
    </location>
    <ligand>
        <name>4-amino-2-methyl-5-(diphosphooxymethyl)pyrimidine</name>
        <dbReference type="ChEBI" id="CHEBI:57841"/>
    </ligand>
</feature>
<feature type="binding site" evidence="1">
    <location>
        <position position="79"/>
    </location>
    <ligand>
        <name>Mg(2+)</name>
        <dbReference type="ChEBI" id="CHEBI:18420"/>
    </ligand>
</feature>
<feature type="binding site" evidence="1">
    <location>
        <position position="98"/>
    </location>
    <ligand>
        <name>Mg(2+)</name>
        <dbReference type="ChEBI" id="CHEBI:18420"/>
    </ligand>
</feature>
<feature type="binding site" evidence="1">
    <location>
        <position position="117"/>
    </location>
    <ligand>
        <name>4-amino-2-methyl-5-(diphosphooxymethyl)pyrimidine</name>
        <dbReference type="ChEBI" id="CHEBI:57841"/>
    </ligand>
</feature>
<feature type="binding site" evidence="1">
    <location>
        <begin position="143"/>
        <end position="145"/>
    </location>
    <ligand>
        <name>2-[(2R,5Z)-2-carboxy-4-methylthiazol-5(2H)-ylidene]ethyl phosphate</name>
        <dbReference type="ChEBI" id="CHEBI:62899"/>
    </ligand>
</feature>
<feature type="binding site" evidence="1">
    <location>
        <position position="146"/>
    </location>
    <ligand>
        <name>4-amino-2-methyl-5-(diphosphooxymethyl)pyrimidine</name>
        <dbReference type="ChEBI" id="CHEBI:57841"/>
    </ligand>
</feature>
<feature type="binding site" evidence="1">
    <location>
        <position position="174"/>
    </location>
    <ligand>
        <name>2-[(2R,5Z)-2-carboxy-4-methylthiazol-5(2H)-ylidene]ethyl phosphate</name>
        <dbReference type="ChEBI" id="CHEBI:62899"/>
    </ligand>
</feature>
<feature type="binding site" evidence="1">
    <location>
        <begin position="194"/>
        <end position="195"/>
    </location>
    <ligand>
        <name>2-[(2R,5Z)-2-carboxy-4-methylthiazol-5(2H)-ylidene]ethyl phosphate</name>
        <dbReference type="ChEBI" id="CHEBI:62899"/>
    </ligand>
</feature>
<organism>
    <name type="scientific">Methanosarcina barkeri (strain Fusaro / DSM 804)</name>
    <dbReference type="NCBI Taxonomy" id="269797"/>
    <lineage>
        <taxon>Archaea</taxon>
        <taxon>Methanobacteriati</taxon>
        <taxon>Methanobacteriota</taxon>
        <taxon>Stenosarchaea group</taxon>
        <taxon>Methanomicrobia</taxon>
        <taxon>Methanosarcinales</taxon>
        <taxon>Methanosarcinaceae</taxon>
        <taxon>Methanosarcina</taxon>
    </lineage>
</organism>
<accession>Q466J5</accession>
<name>THIE_METBF</name>
<comment type="function">
    <text evidence="1">Condenses 4-methyl-5-(beta-hydroxyethyl)thiazole monophosphate (THZ-P) and 2-methyl-4-amino-5-hydroxymethyl pyrimidine pyrophosphate (HMP-PP) to form thiamine monophosphate (TMP).</text>
</comment>
<comment type="catalytic activity">
    <reaction evidence="1">
        <text>2-[(2R,5Z)-2-carboxy-4-methylthiazol-5(2H)-ylidene]ethyl phosphate + 4-amino-2-methyl-5-(diphosphooxymethyl)pyrimidine + 2 H(+) = thiamine phosphate + CO2 + diphosphate</text>
        <dbReference type="Rhea" id="RHEA:47844"/>
        <dbReference type="ChEBI" id="CHEBI:15378"/>
        <dbReference type="ChEBI" id="CHEBI:16526"/>
        <dbReference type="ChEBI" id="CHEBI:33019"/>
        <dbReference type="ChEBI" id="CHEBI:37575"/>
        <dbReference type="ChEBI" id="CHEBI:57841"/>
        <dbReference type="ChEBI" id="CHEBI:62899"/>
        <dbReference type="EC" id="2.5.1.3"/>
    </reaction>
</comment>
<comment type="catalytic activity">
    <reaction evidence="1">
        <text>2-(2-carboxy-4-methylthiazol-5-yl)ethyl phosphate + 4-amino-2-methyl-5-(diphosphooxymethyl)pyrimidine + 2 H(+) = thiamine phosphate + CO2 + diphosphate</text>
        <dbReference type="Rhea" id="RHEA:47848"/>
        <dbReference type="ChEBI" id="CHEBI:15378"/>
        <dbReference type="ChEBI" id="CHEBI:16526"/>
        <dbReference type="ChEBI" id="CHEBI:33019"/>
        <dbReference type="ChEBI" id="CHEBI:37575"/>
        <dbReference type="ChEBI" id="CHEBI:57841"/>
        <dbReference type="ChEBI" id="CHEBI:62890"/>
        <dbReference type="EC" id="2.5.1.3"/>
    </reaction>
</comment>
<comment type="catalytic activity">
    <reaction evidence="1">
        <text>4-methyl-5-(2-phosphooxyethyl)-thiazole + 4-amino-2-methyl-5-(diphosphooxymethyl)pyrimidine + H(+) = thiamine phosphate + diphosphate</text>
        <dbReference type="Rhea" id="RHEA:22328"/>
        <dbReference type="ChEBI" id="CHEBI:15378"/>
        <dbReference type="ChEBI" id="CHEBI:33019"/>
        <dbReference type="ChEBI" id="CHEBI:37575"/>
        <dbReference type="ChEBI" id="CHEBI:57841"/>
        <dbReference type="ChEBI" id="CHEBI:58296"/>
        <dbReference type="EC" id="2.5.1.3"/>
    </reaction>
</comment>
<comment type="cofactor">
    <cofactor evidence="1">
        <name>Mg(2+)</name>
        <dbReference type="ChEBI" id="CHEBI:18420"/>
    </cofactor>
    <text evidence="1">Binds 1 Mg(2+) ion per subunit.</text>
</comment>
<comment type="pathway">
    <text evidence="1">Cofactor biosynthesis; thiamine diphosphate biosynthesis; thiamine phosphate from 4-amino-2-methyl-5-diphosphomethylpyrimidine and 4-methyl-5-(2-phosphoethyl)-thiazole: step 1/1.</text>
</comment>
<comment type="similarity">
    <text evidence="1">Belongs to the thiamine-phosphate synthase family.</text>
</comment>